<reference key="1">
    <citation type="journal article" date="2006" name="Proc. Natl. Acad. Sci. U.S.A.">
        <title>The partitioned Rhizobium etli genome: genetic and metabolic redundancy in seven interacting replicons.</title>
        <authorList>
            <person name="Gonzalez V."/>
            <person name="Santamaria R.I."/>
            <person name="Bustos P."/>
            <person name="Hernandez-Gonzalez I."/>
            <person name="Medrano-Soto A."/>
            <person name="Moreno-Hagelsieb G."/>
            <person name="Janga S.C."/>
            <person name="Ramirez M.A."/>
            <person name="Jimenez-Jacinto V."/>
            <person name="Collado-Vides J."/>
            <person name="Davila G."/>
        </authorList>
    </citation>
    <scope>NUCLEOTIDE SEQUENCE [LARGE SCALE GENOMIC DNA]</scope>
    <source>
        <strain>ATCC 51251 / DSM 11541 / JCM 21823 / NBRC 15573 / CFN 42</strain>
    </source>
</reference>
<feature type="chain" id="PRO_1000045599" description="Glycine dehydrogenase (decarboxylating)">
    <location>
        <begin position="1"/>
        <end position="954"/>
    </location>
</feature>
<feature type="modified residue" description="N6-(pyridoxal phosphate)lysine" evidence="1">
    <location>
        <position position="704"/>
    </location>
</feature>
<dbReference type="EC" id="1.4.4.2" evidence="1"/>
<dbReference type="EMBL" id="CP000133">
    <property type="protein sequence ID" value="ABC91023.1"/>
    <property type="molecule type" value="Genomic_DNA"/>
</dbReference>
<dbReference type="RefSeq" id="WP_011425504.1">
    <property type="nucleotide sequence ID" value="NC_007761.1"/>
</dbReference>
<dbReference type="SMR" id="Q2K813"/>
<dbReference type="KEGG" id="ret:RHE_CH02243"/>
<dbReference type="eggNOG" id="COG0403">
    <property type="taxonomic scope" value="Bacteria"/>
</dbReference>
<dbReference type="eggNOG" id="COG1003">
    <property type="taxonomic scope" value="Bacteria"/>
</dbReference>
<dbReference type="HOGENOM" id="CLU_004620_4_0_5"/>
<dbReference type="OrthoDB" id="9801272at2"/>
<dbReference type="Proteomes" id="UP000001936">
    <property type="component" value="Chromosome"/>
</dbReference>
<dbReference type="GO" id="GO:0005829">
    <property type="term" value="C:cytosol"/>
    <property type="evidence" value="ECO:0007669"/>
    <property type="project" value="TreeGrafter"/>
</dbReference>
<dbReference type="GO" id="GO:0005960">
    <property type="term" value="C:glycine cleavage complex"/>
    <property type="evidence" value="ECO:0007669"/>
    <property type="project" value="TreeGrafter"/>
</dbReference>
<dbReference type="GO" id="GO:0016594">
    <property type="term" value="F:glycine binding"/>
    <property type="evidence" value="ECO:0007669"/>
    <property type="project" value="TreeGrafter"/>
</dbReference>
<dbReference type="GO" id="GO:0004375">
    <property type="term" value="F:glycine dehydrogenase (decarboxylating) activity"/>
    <property type="evidence" value="ECO:0007669"/>
    <property type="project" value="UniProtKB-EC"/>
</dbReference>
<dbReference type="GO" id="GO:0030170">
    <property type="term" value="F:pyridoxal phosphate binding"/>
    <property type="evidence" value="ECO:0007669"/>
    <property type="project" value="TreeGrafter"/>
</dbReference>
<dbReference type="GO" id="GO:0019464">
    <property type="term" value="P:glycine decarboxylation via glycine cleavage system"/>
    <property type="evidence" value="ECO:0007669"/>
    <property type="project" value="UniProtKB-UniRule"/>
</dbReference>
<dbReference type="CDD" id="cd00613">
    <property type="entry name" value="GDC-P"/>
    <property type="match status" value="2"/>
</dbReference>
<dbReference type="FunFam" id="3.40.640.10:FF:000005">
    <property type="entry name" value="Glycine dehydrogenase (decarboxylating), mitochondrial"/>
    <property type="match status" value="1"/>
</dbReference>
<dbReference type="FunFam" id="3.90.1150.10:FF:000007">
    <property type="entry name" value="Glycine dehydrogenase (decarboxylating), mitochondrial"/>
    <property type="match status" value="1"/>
</dbReference>
<dbReference type="FunFam" id="3.40.640.10:FF:000007">
    <property type="entry name" value="glycine dehydrogenase (Decarboxylating), mitochondrial"/>
    <property type="match status" value="1"/>
</dbReference>
<dbReference type="Gene3D" id="3.90.1150.10">
    <property type="entry name" value="Aspartate Aminotransferase, domain 1"/>
    <property type="match status" value="2"/>
</dbReference>
<dbReference type="Gene3D" id="3.40.640.10">
    <property type="entry name" value="Type I PLP-dependent aspartate aminotransferase-like (Major domain)"/>
    <property type="match status" value="2"/>
</dbReference>
<dbReference type="HAMAP" id="MF_00711">
    <property type="entry name" value="GcvP"/>
    <property type="match status" value="1"/>
</dbReference>
<dbReference type="InterPro" id="IPR003437">
    <property type="entry name" value="GcvP"/>
</dbReference>
<dbReference type="InterPro" id="IPR049316">
    <property type="entry name" value="GDC-P_C"/>
</dbReference>
<dbReference type="InterPro" id="IPR049315">
    <property type="entry name" value="GDC-P_N"/>
</dbReference>
<dbReference type="InterPro" id="IPR020581">
    <property type="entry name" value="GDC_P"/>
</dbReference>
<dbReference type="InterPro" id="IPR015424">
    <property type="entry name" value="PyrdxlP-dep_Trfase"/>
</dbReference>
<dbReference type="InterPro" id="IPR015421">
    <property type="entry name" value="PyrdxlP-dep_Trfase_major"/>
</dbReference>
<dbReference type="InterPro" id="IPR015422">
    <property type="entry name" value="PyrdxlP-dep_Trfase_small"/>
</dbReference>
<dbReference type="NCBIfam" id="TIGR00461">
    <property type="entry name" value="gcvP"/>
    <property type="match status" value="1"/>
</dbReference>
<dbReference type="NCBIfam" id="NF003346">
    <property type="entry name" value="PRK04366.1"/>
    <property type="match status" value="1"/>
</dbReference>
<dbReference type="PANTHER" id="PTHR11773:SF1">
    <property type="entry name" value="GLYCINE DEHYDROGENASE (DECARBOXYLATING), MITOCHONDRIAL"/>
    <property type="match status" value="1"/>
</dbReference>
<dbReference type="PANTHER" id="PTHR11773">
    <property type="entry name" value="GLYCINE DEHYDROGENASE, DECARBOXYLATING"/>
    <property type="match status" value="1"/>
</dbReference>
<dbReference type="Pfam" id="PF21478">
    <property type="entry name" value="GcvP2_C"/>
    <property type="match status" value="1"/>
</dbReference>
<dbReference type="Pfam" id="PF02347">
    <property type="entry name" value="GDC-P"/>
    <property type="match status" value="2"/>
</dbReference>
<dbReference type="SUPFAM" id="SSF53383">
    <property type="entry name" value="PLP-dependent transferases"/>
    <property type="match status" value="2"/>
</dbReference>
<protein>
    <recommendedName>
        <fullName evidence="1">Glycine dehydrogenase (decarboxylating)</fullName>
        <ecNumber evidence="1">1.4.4.2</ecNumber>
    </recommendedName>
    <alternativeName>
        <fullName evidence="1">Glycine cleavage system P-protein</fullName>
    </alternativeName>
    <alternativeName>
        <fullName evidence="1">Glycine decarboxylase</fullName>
    </alternativeName>
    <alternativeName>
        <fullName evidence="1">Glycine dehydrogenase (aminomethyl-transferring)</fullName>
    </alternativeName>
</protein>
<gene>
    <name evidence="1" type="primary">gcvP</name>
    <name type="ordered locus">RHE_CH02243</name>
</gene>
<keyword id="KW-0560">Oxidoreductase</keyword>
<keyword id="KW-0663">Pyridoxal phosphate</keyword>
<keyword id="KW-1185">Reference proteome</keyword>
<accession>Q2K813</accession>
<comment type="function">
    <text evidence="1">The glycine cleavage system catalyzes the degradation of glycine. The P protein binds the alpha-amino group of glycine through its pyridoxal phosphate cofactor; CO(2) is released and the remaining methylamine moiety is then transferred to the lipoamide cofactor of the H protein.</text>
</comment>
<comment type="catalytic activity">
    <reaction evidence="1">
        <text>N(6)-[(R)-lipoyl]-L-lysyl-[glycine-cleavage complex H protein] + glycine + H(+) = N(6)-[(R)-S(8)-aminomethyldihydrolipoyl]-L-lysyl-[glycine-cleavage complex H protein] + CO2</text>
        <dbReference type="Rhea" id="RHEA:24304"/>
        <dbReference type="Rhea" id="RHEA-COMP:10494"/>
        <dbReference type="Rhea" id="RHEA-COMP:10495"/>
        <dbReference type="ChEBI" id="CHEBI:15378"/>
        <dbReference type="ChEBI" id="CHEBI:16526"/>
        <dbReference type="ChEBI" id="CHEBI:57305"/>
        <dbReference type="ChEBI" id="CHEBI:83099"/>
        <dbReference type="ChEBI" id="CHEBI:83143"/>
        <dbReference type="EC" id="1.4.4.2"/>
    </reaction>
</comment>
<comment type="cofactor">
    <cofactor evidence="1">
        <name>pyridoxal 5'-phosphate</name>
        <dbReference type="ChEBI" id="CHEBI:597326"/>
    </cofactor>
</comment>
<comment type="subunit">
    <text evidence="1">The glycine cleavage system is composed of four proteins: P, T, L and H.</text>
</comment>
<comment type="similarity">
    <text evidence="1">Belongs to the GcvP family.</text>
</comment>
<proteinExistence type="inferred from homology"/>
<sequence>MTTPTEFQFTDYQPYDFANRRHIGPSPAEMAEMLKVIGYNSLEGLIDATLPPAIRQKAPLVWGAPMTEREALDKLRETANKNKVLVSLIGQGYYGTITPPVIQRNILENPAWYTAYTPYQPEISQGRLEALLNYQTMVCDLTGLDIANASLLDEATAAAEGMAMAERVAKSKAKAFFVDADCHPQTIALIRTRAEPLGWSVIVGNPFTDLDPVDVFGAIFQYPGTHGHVHDFTGLIARLHQAGAISVVAADILALTLLKSPGEMGADIAVGSSQRFGVPVGYGGPHAAFMAVRDAIKRAMPGRLVGVSVDARGNRAYRLSLQTREQHIRREKATSNICTAQVLLAVMASMYAVFHGPDGIKAIAQQVHQKAVLMAKGLEKLGYKVEPESFFDTITVDVGHMQGLILRAAVAEGVNLRKVGETKIGMSLDERTRPATLEAVWRAFGGNFTIADFEPSYRLPKALLRTSEYLSHPIFHMNRAESEMTRYIRRLSDRDLALDRAMIPLGSCTMKLNATAEMLPITWPEFSDIHPFVPADQALGYREMLDDLTEKLCAVTGYDAFSMQPNSGAQGEYAGLLTIRNYHIANGEGHRDVCLIPTSAHGTNPASAQMVGMKVVVVKVRENGDIDMEDFRAKAEEHAANLSCCMITYPSTHGVFEETVKEICELVHKHGGQVYLDGANMNAMVGLSRPGDIGSDVSHLNLHKTFCIPHGGGGPGMGPIGVKAHLAPHLPGHPETDGRPGAVSAAPFGSASILPISWSYCLMMGGEGLTQATKVAILNANYIATRLKGAYNVLYKSKTGRVAHECIIDTRPLVDSSGVTVDDVAKRLIDCGFHAPTMSWPVAGTLMIEPTESETKAELDRFCEAMLAIREEARAIEDGRMDKTNNPLKNAPHTVEDLVGEWDRPYSREQACFPPGAFRVDKYWSPVNRVDNVYGDRNLICTCPPVESYAEAAE</sequence>
<name>GCSP_RHIEC</name>
<evidence type="ECO:0000255" key="1">
    <source>
        <dbReference type="HAMAP-Rule" id="MF_00711"/>
    </source>
</evidence>
<organism>
    <name type="scientific">Rhizobium etli (strain ATCC 51251 / DSM 11541 / JCM 21823 / NBRC 15573 / CFN 42)</name>
    <dbReference type="NCBI Taxonomy" id="347834"/>
    <lineage>
        <taxon>Bacteria</taxon>
        <taxon>Pseudomonadati</taxon>
        <taxon>Pseudomonadota</taxon>
        <taxon>Alphaproteobacteria</taxon>
        <taxon>Hyphomicrobiales</taxon>
        <taxon>Rhizobiaceae</taxon>
        <taxon>Rhizobium/Agrobacterium group</taxon>
        <taxon>Rhizobium</taxon>
    </lineage>
</organism>